<protein>
    <recommendedName>
        <fullName evidence="1">Protein-export membrane protein SecF</fullName>
    </recommendedName>
</protein>
<proteinExistence type="inferred from homology"/>
<reference key="1">
    <citation type="journal article" date="1999" name="Genetics">
        <title>Divergence of the hyperthermophilic archaea Pyrococcus furiosus and P. horikoshii inferred from complete genomic sequences.</title>
        <authorList>
            <person name="Maeder D.L."/>
            <person name="Weiss R.B."/>
            <person name="Dunn D.M."/>
            <person name="Cherry J.L."/>
            <person name="Gonzalez J.M."/>
            <person name="DiRuggiero J."/>
            <person name="Robb F.T."/>
        </authorList>
    </citation>
    <scope>NUCLEOTIDE SEQUENCE [LARGE SCALE GENOMIC DNA]</scope>
    <source>
        <strain>ATCC 43587 / DSM 3638 / JCM 8422 / Vc1</strain>
    </source>
</reference>
<dbReference type="EMBL" id="AE009950">
    <property type="protein sequence ID" value="AAL80297.1"/>
    <property type="molecule type" value="Genomic_DNA"/>
</dbReference>
<dbReference type="STRING" id="186497.PF0173"/>
<dbReference type="TCDB" id="3.A.5.7.2">
    <property type="family name" value="the general secretory pathway (sec) family"/>
</dbReference>
<dbReference type="PaxDb" id="186497-PF0173"/>
<dbReference type="KEGG" id="pfu:PF0173"/>
<dbReference type="PATRIC" id="fig|186497.12.peg.180"/>
<dbReference type="eggNOG" id="arCOG03054">
    <property type="taxonomic scope" value="Archaea"/>
</dbReference>
<dbReference type="HOGENOM" id="CLU_060478_0_0_2"/>
<dbReference type="OrthoDB" id="85411at2157"/>
<dbReference type="PhylomeDB" id="Q8U4B5"/>
<dbReference type="Proteomes" id="UP000001013">
    <property type="component" value="Chromosome"/>
</dbReference>
<dbReference type="GO" id="GO:0005886">
    <property type="term" value="C:plasma membrane"/>
    <property type="evidence" value="ECO:0007669"/>
    <property type="project" value="UniProtKB-SubCell"/>
</dbReference>
<dbReference type="GO" id="GO:0065002">
    <property type="term" value="P:intracellular protein transmembrane transport"/>
    <property type="evidence" value="ECO:0007669"/>
    <property type="project" value="UniProtKB-UniRule"/>
</dbReference>
<dbReference type="GO" id="GO:0006605">
    <property type="term" value="P:protein targeting"/>
    <property type="evidence" value="ECO:0007669"/>
    <property type="project" value="UniProtKB-UniRule"/>
</dbReference>
<dbReference type="Gene3D" id="1.20.1640.10">
    <property type="entry name" value="Multidrug efflux transporter AcrB transmembrane domain"/>
    <property type="match status" value="1"/>
</dbReference>
<dbReference type="HAMAP" id="MF_01464_A">
    <property type="entry name" value="SecF_A"/>
    <property type="match status" value="1"/>
</dbReference>
<dbReference type="InterPro" id="IPR022813">
    <property type="entry name" value="SecD/SecF_arch_bac"/>
</dbReference>
<dbReference type="InterPro" id="IPR048634">
    <property type="entry name" value="SecD_SecF_C"/>
</dbReference>
<dbReference type="InterPro" id="IPR024921">
    <property type="entry name" value="SecF_arc"/>
</dbReference>
<dbReference type="NCBIfam" id="NF006356">
    <property type="entry name" value="PRK08578.1-4"/>
    <property type="match status" value="1"/>
</dbReference>
<dbReference type="PANTHER" id="PTHR30081:SF8">
    <property type="entry name" value="PROTEIN TRANSLOCASE SUBUNIT SECF"/>
    <property type="match status" value="1"/>
</dbReference>
<dbReference type="PANTHER" id="PTHR30081">
    <property type="entry name" value="PROTEIN-EXPORT MEMBRANE PROTEIN SEC"/>
    <property type="match status" value="1"/>
</dbReference>
<dbReference type="Pfam" id="PF02355">
    <property type="entry name" value="SecD_SecF_C"/>
    <property type="match status" value="1"/>
</dbReference>
<dbReference type="SUPFAM" id="SSF82866">
    <property type="entry name" value="Multidrug efflux transporter AcrB transmembrane domain"/>
    <property type="match status" value="1"/>
</dbReference>
<name>SECF_PYRFU</name>
<keyword id="KW-1003">Cell membrane</keyword>
<keyword id="KW-0472">Membrane</keyword>
<keyword id="KW-0653">Protein transport</keyword>
<keyword id="KW-1185">Reference proteome</keyword>
<keyword id="KW-0811">Translocation</keyword>
<keyword id="KW-0812">Transmembrane</keyword>
<keyword id="KW-1133">Transmembrane helix</keyword>
<keyword id="KW-0813">Transport</keyword>
<sequence length="296" mass="32397">MPEVDNVIKEKLKLLVEMDPKKMIIYPLIVFGIAIIIIIANYVMTGSFVKEGIELRGGSVITLQGVNVSPDEIAKSIKEKTGIDVTVEKFSGVGGSGVRVYVSAGDDVNLVREALKEMFPDVEPQTVVIGPTFGEIVREQGIKAIVYAFIGMAIVVFLFFRVPVPSMTVVFSAFSDMIIAIALMNIFGIELSQATIAALLMLIGYSVDSNILLTTRLLRRKEFTVEEAYYSSLKTGFTMSTTTLGALASLWIFSTAQVIDDIASVLIFGLLADFMNTWILNAGVLRLYIAKREGKE</sequence>
<feature type="chain" id="PRO_0000412711" description="Protein-export membrane protein SecF">
    <location>
        <begin position="1"/>
        <end position="296"/>
    </location>
</feature>
<feature type="transmembrane region" description="Helical" evidence="1">
    <location>
        <begin position="23"/>
        <end position="43"/>
    </location>
</feature>
<feature type="transmembrane region" description="Helical" evidence="1">
    <location>
        <begin position="144"/>
        <end position="164"/>
    </location>
</feature>
<feature type="transmembrane region" description="Helical" evidence="1">
    <location>
        <begin position="169"/>
        <end position="189"/>
    </location>
</feature>
<feature type="transmembrane region" description="Helical" evidence="1">
    <location>
        <begin position="194"/>
        <end position="214"/>
    </location>
</feature>
<feature type="transmembrane region" description="Helical" evidence="1">
    <location>
        <begin position="236"/>
        <end position="256"/>
    </location>
</feature>
<feature type="transmembrane region" description="Helical" evidence="1">
    <location>
        <begin position="265"/>
        <end position="285"/>
    </location>
</feature>
<comment type="function">
    <text evidence="1">Involved in protein export.</text>
</comment>
<comment type="subunit">
    <text evidence="1">Part of the protein translocation apparatus. Forms a complex with SecD.</text>
</comment>
<comment type="subcellular location">
    <subcellularLocation>
        <location evidence="1">Cell membrane</location>
        <topology evidence="1">Multi-pass membrane protein</topology>
    </subcellularLocation>
</comment>
<comment type="similarity">
    <text evidence="1">Belongs to the SecD/SecF family. SecF subfamily.</text>
</comment>
<evidence type="ECO:0000255" key="1">
    <source>
        <dbReference type="HAMAP-Rule" id="MF_01464"/>
    </source>
</evidence>
<accession>Q8U4B5</accession>
<organism>
    <name type="scientific">Pyrococcus furiosus (strain ATCC 43587 / DSM 3638 / JCM 8422 / Vc1)</name>
    <dbReference type="NCBI Taxonomy" id="186497"/>
    <lineage>
        <taxon>Archaea</taxon>
        <taxon>Methanobacteriati</taxon>
        <taxon>Methanobacteriota</taxon>
        <taxon>Thermococci</taxon>
        <taxon>Thermococcales</taxon>
        <taxon>Thermococcaceae</taxon>
        <taxon>Pyrococcus</taxon>
    </lineage>
</organism>
<gene>
    <name evidence="1" type="primary">secF</name>
    <name type="ordered locus">PF0173</name>
</gene>